<feature type="chain" id="PRO_1000125782" description="Photosystem I reaction center subunit PsaK">
    <location>
        <begin position="1"/>
        <end position="86"/>
    </location>
</feature>
<feature type="transmembrane region" description="Helical" evidence="1">
    <location>
        <begin position="14"/>
        <end position="34"/>
    </location>
</feature>
<feature type="transmembrane region" description="Helical" evidence="1">
    <location>
        <begin position="57"/>
        <end position="77"/>
    </location>
</feature>
<gene>
    <name evidence="1" type="primary">psaK</name>
    <name type="ordered locus">Npun_F4580</name>
</gene>
<keyword id="KW-0472">Membrane</keyword>
<keyword id="KW-0602">Photosynthesis</keyword>
<keyword id="KW-0603">Photosystem I</keyword>
<keyword id="KW-1185">Reference proteome</keyword>
<keyword id="KW-0793">Thylakoid</keyword>
<keyword id="KW-0812">Transmembrane</keyword>
<keyword id="KW-1133">Transmembrane helix</keyword>
<sequence length="86" mass="8785">MFTSTLLAAATTPLQWSPTVGLIIIIANIIAIAFGKSTIKYPNAEPALPSSNLFGGFGLPALLATTAFGHILGVGAVLGLHNLGRI</sequence>
<reference key="1">
    <citation type="journal article" date="2013" name="Plant Physiol.">
        <title>A Nostoc punctiforme Sugar Transporter Necessary to Establish a Cyanobacterium-Plant Symbiosis.</title>
        <authorList>
            <person name="Ekman M."/>
            <person name="Picossi S."/>
            <person name="Campbell E.L."/>
            <person name="Meeks J.C."/>
            <person name="Flores E."/>
        </authorList>
    </citation>
    <scope>NUCLEOTIDE SEQUENCE [LARGE SCALE GENOMIC DNA]</scope>
    <source>
        <strain>ATCC 29133 / PCC 73102</strain>
    </source>
</reference>
<protein>
    <recommendedName>
        <fullName evidence="1">Photosystem I reaction center subunit PsaK</fullName>
    </recommendedName>
    <alternativeName>
        <fullName evidence="1">Photosystem I subunit X</fullName>
    </alternativeName>
</protein>
<evidence type="ECO:0000255" key="1">
    <source>
        <dbReference type="HAMAP-Rule" id="MF_00474"/>
    </source>
</evidence>
<organism>
    <name type="scientific">Nostoc punctiforme (strain ATCC 29133 / PCC 73102)</name>
    <dbReference type="NCBI Taxonomy" id="63737"/>
    <lineage>
        <taxon>Bacteria</taxon>
        <taxon>Bacillati</taxon>
        <taxon>Cyanobacteriota</taxon>
        <taxon>Cyanophyceae</taxon>
        <taxon>Nostocales</taxon>
        <taxon>Nostocaceae</taxon>
        <taxon>Nostoc</taxon>
    </lineage>
</organism>
<proteinExistence type="inferred from homology"/>
<accession>B2IWT4</accession>
<name>PSAK_NOSP7</name>
<comment type="subcellular location">
    <subcellularLocation>
        <location evidence="1">Cellular thylakoid membrane</location>
        <topology evidence="1">Multi-pass membrane protein</topology>
    </subcellularLocation>
</comment>
<comment type="similarity">
    <text evidence="1">Belongs to the PsaG/PsaK family.</text>
</comment>
<dbReference type="EMBL" id="CP001037">
    <property type="protein sequence ID" value="ACC82940.1"/>
    <property type="molecule type" value="Genomic_DNA"/>
</dbReference>
<dbReference type="RefSeq" id="WP_012410900.1">
    <property type="nucleotide sequence ID" value="NC_010628.1"/>
</dbReference>
<dbReference type="SMR" id="B2IWT4"/>
<dbReference type="STRING" id="63737.Npun_F4580"/>
<dbReference type="EnsemblBacteria" id="ACC82940">
    <property type="protein sequence ID" value="ACC82940"/>
    <property type="gene ID" value="Npun_F4580"/>
</dbReference>
<dbReference type="KEGG" id="npu:Npun_F4580"/>
<dbReference type="eggNOG" id="ENOG5032YIH">
    <property type="taxonomic scope" value="Bacteria"/>
</dbReference>
<dbReference type="HOGENOM" id="CLU_160496_1_0_3"/>
<dbReference type="PhylomeDB" id="B2IWT4"/>
<dbReference type="Proteomes" id="UP000001191">
    <property type="component" value="Chromosome"/>
</dbReference>
<dbReference type="GO" id="GO:0009522">
    <property type="term" value="C:photosystem I"/>
    <property type="evidence" value="ECO:0007669"/>
    <property type="project" value="UniProtKB-KW"/>
</dbReference>
<dbReference type="GO" id="GO:0031676">
    <property type="term" value="C:plasma membrane-derived thylakoid membrane"/>
    <property type="evidence" value="ECO:0007669"/>
    <property type="project" value="UniProtKB-SubCell"/>
</dbReference>
<dbReference type="GO" id="GO:0015979">
    <property type="term" value="P:photosynthesis"/>
    <property type="evidence" value="ECO:0007669"/>
    <property type="project" value="UniProtKB-UniRule"/>
</dbReference>
<dbReference type="Gene3D" id="1.20.860.20">
    <property type="entry name" value="Photosystem I PsaK, reaction centre"/>
    <property type="match status" value="1"/>
</dbReference>
<dbReference type="HAMAP" id="MF_00474">
    <property type="entry name" value="PSI_PsaK"/>
    <property type="match status" value="1"/>
</dbReference>
<dbReference type="InterPro" id="IPR035982">
    <property type="entry name" value="PSI_centre_PsaK_sf"/>
</dbReference>
<dbReference type="InterPro" id="IPR000549">
    <property type="entry name" value="PSI_PsaG/PsaK"/>
</dbReference>
<dbReference type="InterPro" id="IPR017492">
    <property type="entry name" value="PSI_PsaK"/>
</dbReference>
<dbReference type="InterPro" id="IPR037101">
    <property type="entry name" value="PSI_PsaK_bact"/>
</dbReference>
<dbReference type="NCBIfam" id="TIGR03049">
    <property type="entry name" value="PS_I_psaK"/>
    <property type="match status" value="1"/>
</dbReference>
<dbReference type="Pfam" id="PF01241">
    <property type="entry name" value="PSI_PSAK"/>
    <property type="match status" value="1"/>
</dbReference>
<dbReference type="SUPFAM" id="SSF81563">
    <property type="entry name" value="Photosystem I reaction center subunit X, PsaK"/>
    <property type="match status" value="1"/>
</dbReference>
<dbReference type="PROSITE" id="PS01026">
    <property type="entry name" value="PHOTOSYSTEM_I_PSAGK"/>
    <property type="match status" value="1"/>
</dbReference>